<gene>
    <name type="primary">Ska3</name>
    <name type="synonym">Rama1</name>
</gene>
<reference key="1">
    <citation type="journal article" date="2005" name="Science">
        <title>The transcriptional landscape of the mammalian genome.</title>
        <authorList>
            <person name="Carninci P."/>
            <person name="Kasukawa T."/>
            <person name="Katayama S."/>
            <person name="Gough J."/>
            <person name="Frith M.C."/>
            <person name="Maeda N."/>
            <person name="Oyama R."/>
            <person name="Ravasi T."/>
            <person name="Lenhard B."/>
            <person name="Wells C."/>
            <person name="Kodzius R."/>
            <person name="Shimokawa K."/>
            <person name="Bajic V.B."/>
            <person name="Brenner S.E."/>
            <person name="Batalov S."/>
            <person name="Forrest A.R."/>
            <person name="Zavolan M."/>
            <person name="Davis M.J."/>
            <person name="Wilming L.G."/>
            <person name="Aidinis V."/>
            <person name="Allen J.E."/>
            <person name="Ambesi-Impiombato A."/>
            <person name="Apweiler R."/>
            <person name="Aturaliya R.N."/>
            <person name="Bailey T.L."/>
            <person name="Bansal M."/>
            <person name="Baxter L."/>
            <person name="Beisel K.W."/>
            <person name="Bersano T."/>
            <person name="Bono H."/>
            <person name="Chalk A.M."/>
            <person name="Chiu K.P."/>
            <person name="Choudhary V."/>
            <person name="Christoffels A."/>
            <person name="Clutterbuck D.R."/>
            <person name="Crowe M.L."/>
            <person name="Dalla E."/>
            <person name="Dalrymple B.P."/>
            <person name="de Bono B."/>
            <person name="Della Gatta G."/>
            <person name="di Bernardo D."/>
            <person name="Down T."/>
            <person name="Engstrom P."/>
            <person name="Fagiolini M."/>
            <person name="Faulkner G."/>
            <person name="Fletcher C.F."/>
            <person name="Fukushima T."/>
            <person name="Furuno M."/>
            <person name="Futaki S."/>
            <person name="Gariboldi M."/>
            <person name="Georgii-Hemming P."/>
            <person name="Gingeras T.R."/>
            <person name="Gojobori T."/>
            <person name="Green R.E."/>
            <person name="Gustincich S."/>
            <person name="Harbers M."/>
            <person name="Hayashi Y."/>
            <person name="Hensch T.K."/>
            <person name="Hirokawa N."/>
            <person name="Hill D."/>
            <person name="Huminiecki L."/>
            <person name="Iacono M."/>
            <person name="Ikeo K."/>
            <person name="Iwama A."/>
            <person name="Ishikawa T."/>
            <person name="Jakt M."/>
            <person name="Kanapin A."/>
            <person name="Katoh M."/>
            <person name="Kawasawa Y."/>
            <person name="Kelso J."/>
            <person name="Kitamura H."/>
            <person name="Kitano H."/>
            <person name="Kollias G."/>
            <person name="Krishnan S.P."/>
            <person name="Kruger A."/>
            <person name="Kummerfeld S.K."/>
            <person name="Kurochkin I.V."/>
            <person name="Lareau L.F."/>
            <person name="Lazarevic D."/>
            <person name="Lipovich L."/>
            <person name="Liu J."/>
            <person name="Liuni S."/>
            <person name="McWilliam S."/>
            <person name="Madan Babu M."/>
            <person name="Madera M."/>
            <person name="Marchionni L."/>
            <person name="Matsuda H."/>
            <person name="Matsuzawa S."/>
            <person name="Miki H."/>
            <person name="Mignone F."/>
            <person name="Miyake S."/>
            <person name="Morris K."/>
            <person name="Mottagui-Tabar S."/>
            <person name="Mulder N."/>
            <person name="Nakano N."/>
            <person name="Nakauchi H."/>
            <person name="Ng P."/>
            <person name="Nilsson R."/>
            <person name="Nishiguchi S."/>
            <person name="Nishikawa S."/>
            <person name="Nori F."/>
            <person name="Ohara O."/>
            <person name="Okazaki Y."/>
            <person name="Orlando V."/>
            <person name="Pang K.C."/>
            <person name="Pavan W.J."/>
            <person name="Pavesi G."/>
            <person name="Pesole G."/>
            <person name="Petrovsky N."/>
            <person name="Piazza S."/>
            <person name="Reed J."/>
            <person name="Reid J.F."/>
            <person name="Ring B.Z."/>
            <person name="Ringwald M."/>
            <person name="Rost B."/>
            <person name="Ruan Y."/>
            <person name="Salzberg S.L."/>
            <person name="Sandelin A."/>
            <person name="Schneider C."/>
            <person name="Schoenbach C."/>
            <person name="Sekiguchi K."/>
            <person name="Semple C.A."/>
            <person name="Seno S."/>
            <person name="Sessa L."/>
            <person name="Sheng Y."/>
            <person name="Shibata Y."/>
            <person name="Shimada H."/>
            <person name="Shimada K."/>
            <person name="Silva D."/>
            <person name="Sinclair B."/>
            <person name="Sperling S."/>
            <person name="Stupka E."/>
            <person name="Sugiura K."/>
            <person name="Sultana R."/>
            <person name="Takenaka Y."/>
            <person name="Taki K."/>
            <person name="Tammoja K."/>
            <person name="Tan S.L."/>
            <person name="Tang S."/>
            <person name="Taylor M.S."/>
            <person name="Tegner J."/>
            <person name="Teichmann S.A."/>
            <person name="Ueda H.R."/>
            <person name="van Nimwegen E."/>
            <person name="Verardo R."/>
            <person name="Wei C.L."/>
            <person name="Yagi K."/>
            <person name="Yamanishi H."/>
            <person name="Zabarovsky E."/>
            <person name="Zhu S."/>
            <person name="Zimmer A."/>
            <person name="Hide W."/>
            <person name="Bult C."/>
            <person name="Grimmond S.M."/>
            <person name="Teasdale R.D."/>
            <person name="Liu E.T."/>
            <person name="Brusic V."/>
            <person name="Quackenbush J."/>
            <person name="Wahlestedt C."/>
            <person name="Mattick J.S."/>
            <person name="Hume D.A."/>
            <person name="Kai C."/>
            <person name="Sasaki D."/>
            <person name="Tomaru Y."/>
            <person name="Fukuda S."/>
            <person name="Kanamori-Katayama M."/>
            <person name="Suzuki M."/>
            <person name="Aoki J."/>
            <person name="Arakawa T."/>
            <person name="Iida J."/>
            <person name="Imamura K."/>
            <person name="Itoh M."/>
            <person name="Kato T."/>
            <person name="Kawaji H."/>
            <person name="Kawagashira N."/>
            <person name="Kawashima T."/>
            <person name="Kojima M."/>
            <person name="Kondo S."/>
            <person name="Konno H."/>
            <person name="Nakano K."/>
            <person name="Ninomiya N."/>
            <person name="Nishio T."/>
            <person name="Okada M."/>
            <person name="Plessy C."/>
            <person name="Shibata K."/>
            <person name="Shiraki T."/>
            <person name="Suzuki S."/>
            <person name="Tagami M."/>
            <person name="Waki K."/>
            <person name="Watahiki A."/>
            <person name="Okamura-Oho Y."/>
            <person name="Suzuki H."/>
            <person name="Kawai J."/>
            <person name="Hayashizaki Y."/>
        </authorList>
    </citation>
    <scope>NUCLEOTIDE SEQUENCE [LARGE SCALE MRNA]</scope>
    <source>
        <strain>NOD</strain>
        <tissue>Dendritic cell</tissue>
    </source>
</reference>
<reference key="2">
    <citation type="journal article" date="2004" name="Genome Res.">
        <title>The status, quality, and expansion of the NIH full-length cDNA project: the Mammalian Gene Collection (MGC).</title>
        <authorList>
            <consortium name="The MGC Project Team"/>
        </authorList>
    </citation>
    <scope>NUCLEOTIDE SEQUENCE [LARGE SCALE MRNA]</scope>
</reference>
<reference key="3">
    <citation type="journal article" date="2012" name="Cell Cycle">
        <title>Localization and function of the Ska complex during mouse oocyte meiotic maturation.</title>
        <authorList>
            <person name="Zhang Q.H."/>
            <person name="Qi S.T."/>
            <person name="Wang Z.B."/>
            <person name="Yang C.R."/>
            <person name="Wei Y.C."/>
            <person name="Chen L."/>
            <person name="Ouyang Y.C."/>
            <person name="Hou Y."/>
            <person name="Schatten H."/>
            <person name="Sun Q.Y."/>
        </authorList>
    </citation>
    <scope>FUNCTION</scope>
</reference>
<sequence length="411" mass="45370">MNPIQSFHCKLRGLATTLDSETARLLRALDGEDSDFEDSPGRILHDLHSEVQTLKDNVNALLDEARLENQESTRFKKATKILMEKNSADVRKLREFFQKYGYQARDKEDSGCEHRVNNSTPELAVCKDIQKAGVKELSDPCVPSGSVSEEPLRSPQLSDFGLQRYIISQVPANPPQTAASLKEERVAETPPAKDPSVQVLKTPRCALRMDDFECETPKLEHFGISEHTMCLNEDYTMGLKNMKNIKSSLLSGVSGEAIGTGPVTSDNSFAIPGPIIQQMEENDVEYVSSPLPPKFCTPGLKIPSTMDRTDLVSIDYPLSKPNSSSTDLEIKDCVPLILNSDECYQSFAEPPSSAITSCENFATPSPPKVTAIPEDILQMITKHSSNLASPLDVKVMPRRKGTRGAANKENW</sequence>
<organism>
    <name type="scientific">Mus musculus</name>
    <name type="common">Mouse</name>
    <dbReference type="NCBI Taxonomy" id="10090"/>
    <lineage>
        <taxon>Eukaryota</taxon>
        <taxon>Metazoa</taxon>
        <taxon>Chordata</taxon>
        <taxon>Craniata</taxon>
        <taxon>Vertebrata</taxon>
        <taxon>Euteleostomi</taxon>
        <taxon>Mammalia</taxon>
        <taxon>Eutheria</taxon>
        <taxon>Euarchontoglires</taxon>
        <taxon>Glires</taxon>
        <taxon>Rodentia</taxon>
        <taxon>Myomorpha</taxon>
        <taxon>Muroidea</taxon>
        <taxon>Muridae</taxon>
        <taxon>Murinae</taxon>
        <taxon>Mus</taxon>
        <taxon>Mus</taxon>
    </lineage>
</organism>
<evidence type="ECO:0000250" key="1">
    <source>
        <dbReference type="UniProtKB" id="Q8IX90"/>
    </source>
</evidence>
<evidence type="ECO:0000269" key="2">
    <source>
    </source>
</evidence>
<evidence type="ECO:0000305" key="3"/>
<feature type="chain" id="PRO_0000089879" description="SKA complex subunit 3">
    <location>
        <begin position="1"/>
        <end position="411"/>
    </location>
</feature>
<feature type="region of interest" description="Binds the NDC80 complex" evidence="1">
    <location>
        <begin position="102"/>
        <end position="410"/>
    </location>
</feature>
<feature type="region of interest" description="Binds microtubules and contacts the microtubule-binding domain of SKA1" evidence="1">
    <location>
        <begin position="195"/>
        <end position="410"/>
    </location>
</feature>
<feature type="region of interest" description="Required for localization to kinetochores" evidence="1">
    <location>
        <begin position="349"/>
        <end position="410"/>
    </location>
</feature>
<feature type="modified residue" description="Phosphoserine" evidence="1">
    <location>
        <position position="34"/>
    </location>
</feature>
<feature type="modified residue" description="Phosphoserine" evidence="1">
    <location>
        <position position="119"/>
    </location>
</feature>
<feature type="modified residue" description="Phosphoserine" evidence="1">
    <location>
        <position position="138"/>
    </location>
</feature>
<feature type="modified residue" description="Phosphoserine" evidence="1">
    <location>
        <position position="154"/>
    </location>
</feature>
<feature type="modified residue" description="Phosphoserine" evidence="1">
    <location>
        <position position="158"/>
    </location>
</feature>
<feature type="modified residue" description="Phosphothreonine" evidence="1">
    <location>
        <position position="189"/>
    </location>
</feature>
<feature type="modified residue" description="Phosphothreonine" evidence="1">
    <location>
        <position position="216"/>
    </location>
</feature>
<feature type="modified residue" description="Phosphoserine" evidence="1">
    <location>
        <position position="289"/>
    </location>
</feature>
<feature type="modified residue" description="Phosphothreonine" evidence="1">
    <location>
        <position position="297"/>
    </location>
</feature>
<feature type="modified residue" description="Phosphoserine" evidence="1">
    <location>
        <position position="324"/>
    </location>
</feature>
<feature type="modified residue" description="Phosphoserine" evidence="1">
    <location>
        <position position="352"/>
    </location>
</feature>
<feature type="modified residue" description="Phosphothreonine" evidence="1">
    <location>
        <position position="363"/>
    </location>
</feature>
<feature type="sequence conflict" description="In Ref. 2; AAI17501." evidence="3" ref="2">
    <original>L</original>
    <variation>M</variation>
    <location>
        <position position="391"/>
    </location>
</feature>
<proteinExistence type="evidence at transcript level"/>
<accession>Q8C263</accession>
<accession>Q149T5</accession>
<accession>Q149T6</accession>
<dbReference type="EMBL" id="AK089223">
    <property type="protein sequence ID" value="BAC40798.1"/>
    <property type="molecule type" value="mRNA"/>
</dbReference>
<dbReference type="EMBL" id="BC117500">
    <property type="protein sequence ID" value="AAI17501.1"/>
    <property type="molecule type" value="mRNA"/>
</dbReference>
<dbReference type="EMBL" id="BC117501">
    <property type="protein sequence ID" value="AAI17502.1"/>
    <property type="molecule type" value="mRNA"/>
</dbReference>
<dbReference type="CCDS" id="CCDS27160.1"/>
<dbReference type="RefSeq" id="NP_941007.1">
    <property type="nucleotide sequence ID" value="NM_198605.4"/>
</dbReference>
<dbReference type="SMR" id="Q8C263"/>
<dbReference type="BioGRID" id="230111">
    <property type="interactions" value="2"/>
</dbReference>
<dbReference type="ComplexPortal" id="CPX-5700">
    <property type="entry name" value="Kinetochore SKA complex"/>
</dbReference>
<dbReference type="FunCoup" id="Q8C263">
    <property type="interactions" value="529"/>
</dbReference>
<dbReference type="STRING" id="10090.ENSMUSP00000022536"/>
<dbReference type="GlyGen" id="Q8C263">
    <property type="glycosylation" value="1 site, 1 O-linked glycan (1 site)"/>
</dbReference>
<dbReference type="iPTMnet" id="Q8C263"/>
<dbReference type="PhosphoSitePlus" id="Q8C263"/>
<dbReference type="REPRODUCTION-2DPAGE" id="IPI00387253"/>
<dbReference type="PaxDb" id="10090-ENSMUSP00000022536"/>
<dbReference type="PeptideAtlas" id="Q8C263"/>
<dbReference type="ProteomicsDB" id="257188"/>
<dbReference type="Antibodypedia" id="22379">
    <property type="antibodies" value="188 antibodies from 28 providers"/>
</dbReference>
<dbReference type="DNASU" id="219114"/>
<dbReference type="Ensembl" id="ENSMUST00000022536.3">
    <property type="protein sequence ID" value="ENSMUSP00000022536.3"/>
    <property type="gene ID" value="ENSMUSG00000021965.4"/>
</dbReference>
<dbReference type="GeneID" id="219114"/>
<dbReference type="KEGG" id="mmu:219114"/>
<dbReference type="UCSC" id="uc007udp.1">
    <property type="organism name" value="mouse"/>
</dbReference>
<dbReference type="AGR" id="MGI:3041235"/>
<dbReference type="CTD" id="221150"/>
<dbReference type="MGI" id="MGI:3041235">
    <property type="gene designation" value="Ska3"/>
</dbReference>
<dbReference type="VEuPathDB" id="HostDB:ENSMUSG00000021965"/>
<dbReference type="eggNOG" id="ENOG502QSTX">
    <property type="taxonomic scope" value="Eukaryota"/>
</dbReference>
<dbReference type="GeneTree" id="ENSGT00500000045005"/>
<dbReference type="HOGENOM" id="CLU_033334_1_0_1"/>
<dbReference type="InParanoid" id="Q8C263"/>
<dbReference type="OMA" id="LMKKNSM"/>
<dbReference type="OrthoDB" id="5987638at2759"/>
<dbReference type="PhylomeDB" id="Q8C263"/>
<dbReference type="TreeFam" id="TF332721"/>
<dbReference type="BioGRID-ORCS" id="219114">
    <property type="hits" value="20 hits in 79 CRISPR screens"/>
</dbReference>
<dbReference type="ChiTaRS" id="Ska3">
    <property type="organism name" value="mouse"/>
</dbReference>
<dbReference type="PRO" id="PR:Q8C263"/>
<dbReference type="Proteomes" id="UP000000589">
    <property type="component" value="Chromosome 14"/>
</dbReference>
<dbReference type="RNAct" id="Q8C263">
    <property type="molecule type" value="protein"/>
</dbReference>
<dbReference type="Bgee" id="ENSMUSG00000021965">
    <property type="expression patterns" value="Expressed in embryonic post-anal tail and 124 other cell types or tissues"/>
</dbReference>
<dbReference type="GO" id="GO:0005813">
    <property type="term" value="C:centrosome"/>
    <property type="evidence" value="ECO:0000250"/>
    <property type="project" value="UniProtKB"/>
</dbReference>
<dbReference type="GO" id="GO:0005829">
    <property type="term" value="C:cytosol"/>
    <property type="evidence" value="ECO:0007669"/>
    <property type="project" value="Ensembl"/>
</dbReference>
<dbReference type="GO" id="GO:0000776">
    <property type="term" value="C:kinetochore"/>
    <property type="evidence" value="ECO:0000250"/>
    <property type="project" value="UniProtKB"/>
</dbReference>
<dbReference type="GO" id="GO:0072687">
    <property type="term" value="C:meiotic spindle"/>
    <property type="evidence" value="ECO:0000314"/>
    <property type="project" value="UniProtKB"/>
</dbReference>
<dbReference type="GO" id="GO:0072686">
    <property type="term" value="C:mitotic spindle"/>
    <property type="evidence" value="ECO:0000250"/>
    <property type="project" value="UniProtKB"/>
</dbReference>
<dbReference type="GO" id="GO:0000940">
    <property type="term" value="C:outer kinetochore"/>
    <property type="evidence" value="ECO:0000250"/>
    <property type="project" value="UniProtKB"/>
</dbReference>
<dbReference type="GO" id="GO:0170027">
    <property type="term" value="C:SKA complex"/>
    <property type="evidence" value="ECO:0007669"/>
    <property type="project" value="Ensembl"/>
</dbReference>
<dbReference type="GO" id="GO:0005876">
    <property type="term" value="C:spindle microtubule"/>
    <property type="evidence" value="ECO:0000250"/>
    <property type="project" value="UniProtKB"/>
</dbReference>
<dbReference type="GO" id="GO:0008017">
    <property type="term" value="F:microtubule binding"/>
    <property type="evidence" value="ECO:0000250"/>
    <property type="project" value="UniProtKB"/>
</dbReference>
<dbReference type="GO" id="GO:0051315">
    <property type="term" value="P:attachment of mitotic spindle microtubules to kinetochore"/>
    <property type="evidence" value="ECO:0000250"/>
    <property type="project" value="UniProtKB"/>
</dbReference>
<dbReference type="GO" id="GO:0051301">
    <property type="term" value="P:cell division"/>
    <property type="evidence" value="ECO:0007669"/>
    <property type="project" value="UniProtKB-KW"/>
</dbReference>
<dbReference type="GO" id="GO:0051296">
    <property type="term" value="P:establishment of meiotic spindle orientation"/>
    <property type="evidence" value="ECO:0000315"/>
    <property type="project" value="UniProtKB"/>
</dbReference>
<dbReference type="GO" id="GO:0007080">
    <property type="term" value="P:mitotic metaphase chromosome alignment"/>
    <property type="evidence" value="ECO:0000250"/>
    <property type="project" value="UniProtKB"/>
</dbReference>
<dbReference type="GO" id="GO:0000070">
    <property type="term" value="P:mitotic sister chromatid segregation"/>
    <property type="evidence" value="ECO:0000250"/>
    <property type="project" value="UniProtKB"/>
</dbReference>
<dbReference type="GO" id="GO:0140499">
    <property type="term" value="P:negative regulation of mitotic spindle assembly checkpoint signaling"/>
    <property type="evidence" value="ECO:0000250"/>
    <property type="project" value="UniProtKB"/>
</dbReference>
<dbReference type="GO" id="GO:0031110">
    <property type="term" value="P:regulation of microtubule polymerization or depolymerization"/>
    <property type="evidence" value="ECO:0000250"/>
    <property type="project" value="UniProtKB"/>
</dbReference>
<dbReference type="GO" id="GO:0007056">
    <property type="term" value="P:spindle assembly involved in female meiosis"/>
    <property type="evidence" value="ECO:0000315"/>
    <property type="project" value="UniProtKB"/>
</dbReference>
<dbReference type="Gene3D" id="6.10.250.1400">
    <property type="match status" value="1"/>
</dbReference>
<dbReference type="InterPro" id="IPR033341">
    <property type="entry name" value="SKA3"/>
</dbReference>
<dbReference type="PANTHER" id="PTHR48118">
    <property type="entry name" value="SPINDLE AND KINETOCHORE-ASSOCIATED PROTEIN 3"/>
    <property type="match status" value="1"/>
</dbReference>
<dbReference type="PANTHER" id="PTHR48118:SF1">
    <property type="entry name" value="SPINDLE AND KINETOCHORE-ASSOCIATED PROTEIN 3"/>
    <property type="match status" value="1"/>
</dbReference>
<comment type="function">
    <text evidence="1 2">Component of the SKA complex, a microtubule plus end-binding complex of the outer kinetochore that stabilizes spindle microtubule-kinetochore attachments, promotes alignment of chromosomes at the mitotic spindle equator (chromosome congression) and assists suppression of the spindle assembly checkpoint. Kinetochores, consisting of a centromere-associated inner segment and a microtubule-contacting outer segment, play a crucial role in chromosome segregation by mediating the physical connection between centromeric DNA and spindle microtubules. The outer kinetochore is made up of the ten-subunit KMN network complex, comprising the MIS12, NDC80 and KNL1 complexes, and auxiliary microtubule-associated components such as the SKA complex; together they connect the outer kinetochore with the inner kinetochore, bind microtubules, and mediate interactions with mitotic checkpoint proteins that delay anaphase until chromosomes are bioriented on the spindle. The SKA complex is loaded onto bioriented kinetochores and it facilitates chromosome congression by stabilizing microtubules together with MAPRE1, and end-on attachment of the NDC80 complex to depolymerizing spindle microtubules, thereby assisting the poleward-moving kinetochore in withstanding microtubule pulling forces. The complex associates with dynamic microtubule plus-ends and can track both depolymerizing and elongating microtubules. The complex recruits protein phosphatase 1 (PP1) to the kinetochore in prometaphase and metaphase, to oppose spindle assembly checkpoint signaling and promote the onset of anaphase. Within the complex, binds microtubules but with a much lower affinity than SKA1. Promotes stability of the polo-like kinase PLK1 protein (By similarity). During meiosis the SKA complex stabilizes the meiotic spindle and is required for its migration to the cortex (PubMed:22336914).</text>
</comment>
<comment type="subunit">
    <text evidence="1">Component of the SKA complex, composed of SKA1, SKA2 and SKA3. The SKA complex is a homodimer organized around a central W-shaped coiled-coil structure, formed by the interacting domains of SKA1, SKA2, and SKA3, each end of the 'W' is extended further by the C-terminal microtubule-binding domains of SKA1 and SKA3; the complex forms extended structures on microtubules. Interacts with the NDC80-NUF2 heterodimer of the NDC80 complex (via coiled coils); the interaction localizes the SKA complex to the kinetochore and is required to establish kinetochore-microtubule end-on attachments. Interacts with polo-like kinase PLK1.</text>
</comment>
<comment type="subcellular location">
    <subcellularLocation>
        <location evidence="1">Cytoplasm</location>
        <location evidence="1">Cytoskeleton</location>
        <location evidence="1">Spindle</location>
    </subcellularLocation>
    <subcellularLocation>
        <location evidence="1">Chromosome</location>
        <location evidence="1">Centromere</location>
        <location evidence="1">Kinetochore</location>
    </subcellularLocation>
    <subcellularLocation>
        <location evidence="1">Cytoplasm</location>
        <location evidence="1">Cytoskeleton</location>
        <location evidence="1">Microtubule organizing center</location>
        <location evidence="1">Centrosome</location>
    </subcellularLocation>
    <text evidence="1">Localizes to bioriented kinetochores and spindle microtubules during prometaphase and metaphase in a NDC80 complex-dependent manner. The SKA complex begins to concentrate at kinetochores before microtubule attachment but reaches maximum levels on bioriented metaphase chromosomes. The localization of the SKA complex to kinetochores is positively regulated by protein serine/threonine kinase CDK1. The localization of the SKA complex to kinetochores is negatively regulated by protein serine/threonine kinase AURKB, and this action is opposed directly or indirectly by the PP1 and PP2A protein phosphatase complexes. Localizes at the centrosome during interphase and prophase.</text>
</comment>
<comment type="similarity">
    <text evidence="3">Belongs to the SKA3 family.</text>
</comment>
<keyword id="KW-0131">Cell cycle</keyword>
<keyword id="KW-0132">Cell division</keyword>
<keyword id="KW-0137">Centromere</keyword>
<keyword id="KW-0158">Chromosome</keyword>
<keyword id="KW-0963">Cytoplasm</keyword>
<keyword id="KW-0206">Cytoskeleton</keyword>
<keyword id="KW-0995">Kinetochore</keyword>
<keyword id="KW-0493">Microtubule</keyword>
<keyword id="KW-0498">Mitosis</keyword>
<keyword id="KW-0597">Phosphoprotein</keyword>
<keyword id="KW-1185">Reference proteome</keyword>
<name>SKA3_MOUSE</name>
<protein>
    <recommendedName>
        <fullName evidence="3">SKA complex subunit 3</fullName>
    </recommendedName>
    <alternativeName>
        <fullName>Spindle and kinetochore-associated protein 3</fullName>
    </alternativeName>
</protein>